<feature type="chain" id="PRO_0000413780" description="Cell division protein ZapC">
    <location>
        <begin position="1"/>
        <end position="180"/>
    </location>
</feature>
<sequence>MKIKPDDKWRWFYDAEHDRMMLDLADGMLFRSRYARKMLTPDAFTESGFCVDDAALYFTFEEKCRQSPLSSDQRAELVLNALVAARFLKPLMPKSWHFSAHRQPMQPAVGEMVAVTLADSGEQARLLVVENGDNAALCLLAQPALTLAGKGMVLGDAIKVMNDRLQPHQQEKTTRYARAV</sequence>
<evidence type="ECO:0000255" key="1">
    <source>
        <dbReference type="HAMAP-Rule" id="MF_00906"/>
    </source>
</evidence>
<evidence type="ECO:0000305" key="2"/>
<name>ZAPC_PANAM</name>
<proteinExistence type="inferred from homology"/>
<dbReference type="EMBL" id="CP001875">
    <property type="protein sequence ID" value="ADD76549.1"/>
    <property type="status" value="ALT_INIT"/>
    <property type="molecule type" value="Genomic_DNA"/>
</dbReference>
<dbReference type="RefSeq" id="WP_015700640.1">
    <property type="nucleotide sequence ID" value="NC_013956.2"/>
</dbReference>
<dbReference type="SMR" id="D4GNJ8"/>
<dbReference type="STRING" id="706191.PANA_1382"/>
<dbReference type="KEGG" id="pam:PANA_1382"/>
<dbReference type="PATRIC" id="fig|553.3.peg.2920"/>
<dbReference type="eggNOG" id="ENOG502Z8AH">
    <property type="taxonomic scope" value="Bacteria"/>
</dbReference>
<dbReference type="HOGENOM" id="CLU_128248_0_0_6"/>
<dbReference type="Proteomes" id="UP000001702">
    <property type="component" value="Chromosome"/>
</dbReference>
<dbReference type="GO" id="GO:0005737">
    <property type="term" value="C:cytoplasm"/>
    <property type="evidence" value="ECO:0007669"/>
    <property type="project" value="UniProtKB-SubCell"/>
</dbReference>
<dbReference type="GO" id="GO:0000917">
    <property type="term" value="P:division septum assembly"/>
    <property type="evidence" value="ECO:0007669"/>
    <property type="project" value="UniProtKB-KW"/>
</dbReference>
<dbReference type="GO" id="GO:0043093">
    <property type="term" value="P:FtsZ-dependent cytokinesis"/>
    <property type="evidence" value="ECO:0007669"/>
    <property type="project" value="UniProtKB-UniRule"/>
</dbReference>
<dbReference type="HAMAP" id="MF_00906">
    <property type="entry name" value="ZapC"/>
    <property type="match status" value="1"/>
</dbReference>
<dbReference type="InterPro" id="IPR009809">
    <property type="entry name" value="ZapC"/>
</dbReference>
<dbReference type="InterPro" id="IPR048372">
    <property type="entry name" value="ZapC_C"/>
</dbReference>
<dbReference type="InterPro" id="IPR048373">
    <property type="entry name" value="ZapC_N"/>
</dbReference>
<dbReference type="Pfam" id="PF07126">
    <property type="entry name" value="ZapC_C"/>
    <property type="match status" value="1"/>
</dbReference>
<dbReference type="Pfam" id="PF21083">
    <property type="entry name" value="ZapC_N"/>
    <property type="match status" value="1"/>
</dbReference>
<dbReference type="PIRSF" id="PIRSF010252">
    <property type="entry name" value="ZapC"/>
    <property type="match status" value="1"/>
</dbReference>
<gene>
    <name evidence="1" type="primary">zapC</name>
    <name type="ordered locus">PANA_1382</name>
</gene>
<organism>
    <name type="scientific">Pantoea ananatis (strain LMG 20103)</name>
    <dbReference type="NCBI Taxonomy" id="706191"/>
    <lineage>
        <taxon>Bacteria</taxon>
        <taxon>Pseudomonadati</taxon>
        <taxon>Pseudomonadota</taxon>
        <taxon>Gammaproteobacteria</taxon>
        <taxon>Enterobacterales</taxon>
        <taxon>Erwiniaceae</taxon>
        <taxon>Pantoea</taxon>
    </lineage>
</organism>
<protein>
    <recommendedName>
        <fullName evidence="1">Cell division protein ZapC</fullName>
    </recommendedName>
</protein>
<keyword id="KW-0131">Cell cycle</keyword>
<keyword id="KW-0132">Cell division</keyword>
<keyword id="KW-0963">Cytoplasm</keyword>
<keyword id="KW-1185">Reference proteome</keyword>
<keyword id="KW-0717">Septation</keyword>
<comment type="function">
    <text evidence="1">Contributes to the efficiency of the cell division process by stabilizing the polymeric form of the cell division protein FtsZ. Acts by promoting interactions between FtsZ protofilaments and suppressing the GTPase activity of FtsZ.</text>
</comment>
<comment type="subunit">
    <text evidence="1">Interacts directly with FtsZ.</text>
</comment>
<comment type="subcellular location">
    <subcellularLocation>
        <location evidence="1">Cytoplasm</location>
    </subcellularLocation>
</comment>
<comment type="similarity">
    <text evidence="1">Belongs to the ZapC family.</text>
</comment>
<comment type="sequence caution" evidence="2">
    <conflict type="erroneous initiation">
        <sequence resource="EMBL-CDS" id="ADD76549"/>
    </conflict>
    <text>Extended N-terminus.</text>
</comment>
<accession>D4GNJ8</accession>
<reference key="1">
    <citation type="journal article" date="2010" name="J. Bacteriol.">
        <title>Genome sequence of Pantoea ananatis LMG20103, the causative agent of Eucalyptus blight and dieback.</title>
        <authorList>
            <person name="De Maayer P."/>
            <person name="Chan W.Y."/>
            <person name="Venter S.N."/>
            <person name="Toth I.K."/>
            <person name="Birch P.R."/>
            <person name="Joubert F."/>
            <person name="Coutinho T.A."/>
        </authorList>
    </citation>
    <scope>NUCLEOTIDE SEQUENCE [LARGE SCALE GENOMIC DNA]</scope>
    <source>
        <strain>LMG 20103</strain>
    </source>
</reference>